<name>BCL7A_DANRE</name>
<dbReference type="EMBL" id="AY394963">
    <property type="protein sequence ID" value="AAQ94590.1"/>
    <property type="molecule type" value="mRNA"/>
</dbReference>
<dbReference type="EMBL" id="BC084687">
    <property type="protein sequence ID" value="AAH84687.1"/>
    <property type="molecule type" value="mRNA"/>
</dbReference>
<dbReference type="RefSeq" id="NP_997725.1">
    <molecule id="Q5XFY4-2"/>
    <property type="nucleotide sequence ID" value="NM_212560.1"/>
</dbReference>
<dbReference type="FunCoup" id="Q5XFY4">
    <property type="interactions" value="1359"/>
</dbReference>
<dbReference type="STRING" id="7955.ENSDARP00000114813"/>
<dbReference type="PaxDb" id="7955-ENSDARP00000114813"/>
<dbReference type="Ensembl" id="ENSDART00000192289">
    <molecule id="Q5XFY4-1"/>
    <property type="protein sequence ID" value="ENSDARP00000154468"/>
    <property type="gene ID" value="ENSDARG00000052907"/>
</dbReference>
<dbReference type="GeneID" id="57952"/>
<dbReference type="KEGG" id="dre:57952"/>
<dbReference type="AGR" id="ZFIN:ZDB-GENE-000607-16"/>
<dbReference type="CTD" id="605"/>
<dbReference type="ZFIN" id="ZDB-GENE-000607-16">
    <property type="gene designation" value="bcl7a"/>
</dbReference>
<dbReference type="eggNOG" id="KOG4095">
    <property type="taxonomic scope" value="Eukaryota"/>
</dbReference>
<dbReference type="InParanoid" id="Q5XFY4"/>
<dbReference type="OrthoDB" id="5989898at2759"/>
<dbReference type="PhylomeDB" id="Q5XFY4"/>
<dbReference type="PRO" id="PR:Q5XFY4"/>
<dbReference type="Proteomes" id="UP000000437">
    <property type="component" value="Alternate scaffold 5"/>
</dbReference>
<dbReference type="Proteomes" id="UP000000437">
    <property type="component" value="Chromosome 5"/>
</dbReference>
<dbReference type="Bgee" id="ENSDARG00000052907">
    <property type="expression patterns" value="Expressed in gastrula and 22 other cell types or tissues"/>
</dbReference>
<dbReference type="ExpressionAtlas" id="Q5XFY4">
    <property type="expression patterns" value="baseline and differential"/>
</dbReference>
<dbReference type="InterPro" id="IPR006804">
    <property type="entry name" value="BCL7"/>
</dbReference>
<dbReference type="PANTHER" id="PTHR12767:SF11">
    <property type="entry name" value="B-CELL CLL_LYMPHOMA 7 PROTEIN FAMILY MEMBER A"/>
    <property type="match status" value="1"/>
</dbReference>
<dbReference type="PANTHER" id="PTHR12767">
    <property type="entry name" value="BCL7 RELATED"/>
    <property type="match status" value="1"/>
</dbReference>
<dbReference type="Pfam" id="PF04714">
    <property type="entry name" value="BCL_N"/>
    <property type="match status" value="1"/>
</dbReference>
<organism>
    <name type="scientific">Danio rerio</name>
    <name type="common">Zebrafish</name>
    <name type="synonym">Brachydanio rerio</name>
    <dbReference type="NCBI Taxonomy" id="7955"/>
    <lineage>
        <taxon>Eukaryota</taxon>
        <taxon>Metazoa</taxon>
        <taxon>Chordata</taxon>
        <taxon>Craniata</taxon>
        <taxon>Vertebrata</taxon>
        <taxon>Euteleostomi</taxon>
        <taxon>Actinopterygii</taxon>
        <taxon>Neopterygii</taxon>
        <taxon>Teleostei</taxon>
        <taxon>Ostariophysi</taxon>
        <taxon>Cypriniformes</taxon>
        <taxon>Danionidae</taxon>
        <taxon>Danioninae</taxon>
        <taxon>Danio</taxon>
    </lineage>
</organism>
<protein>
    <recommendedName>
        <fullName>B-cell CLL/lymphoma 7 protein family member A</fullName>
    </recommendedName>
</protein>
<comment type="alternative products">
    <event type="alternative splicing"/>
    <isoform>
        <id>Q5XFY4-1</id>
        <name>1</name>
        <sequence type="displayed"/>
    </isoform>
    <isoform>
        <id>Q5XFY4-2</id>
        <name>2</name>
        <sequence type="described" ref="VSP_019274 VSP_019275"/>
    </isoform>
</comment>
<comment type="similarity">
    <text evidence="3">Belongs to the BCL7 family.</text>
</comment>
<sequence>MSGRSVRAETRSRAKDDIKRVMAAIEKVRKWEKKWVTVGDTSLRIYKWVPVTEPKSDDNKNKKKGKDDKYGSEVTTPENSSSPGMMDMHDDNSNQSSIADSSPLKQETSNNTSPAPEPMAASQNDSSDLKNDQYPSKQPSSGQDHKSEQNHCSSESMTSKRDSKSQGDSESFLDSSKSAQELEDGAPPSKKGKIDSSSEES</sequence>
<keyword id="KW-0025">Alternative splicing</keyword>
<keyword id="KW-1185">Reference proteome</keyword>
<accession>Q5XFY4</accession>
<accession>Q6TLE3</accession>
<evidence type="ECO:0000256" key="1">
    <source>
        <dbReference type="SAM" id="MobiDB-lite"/>
    </source>
</evidence>
<evidence type="ECO:0000303" key="2">
    <source>
    </source>
</evidence>
<evidence type="ECO:0000305" key="3"/>
<gene>
    <name type="primary">bcl7a</name>
    <name type="ORF">zgc:92023</name>
</gene>
<reference key="1">
    <citation type="journal article" date="2004" name="Proc. Natl. Acad. Sci. U.S.A.">
        <title>Hematopoietic gene expression profile in zebrafish kidney marrow.</title>
        <authorList>
            <person name="Song H.-D."/>
            <person name="Sun X.-J."/>
            <person name="Deng M."/>
            <person name="Zhang G.-W."/>
            <person name="Zhou Y."/>
            <person name="Wu X.-Y."/>
            <person name="Sheng Y."/>
            <person name="Chen Y."/>
            <person name="Ruan Z."/>
            <person name="Jiang C.-L."/>
            <person name="Fan H.-Y."/>
            <person name="Zon L.I."/>
            <person name="Kanki J.P."/>
            <person name="Liu T.X."/>
            <person name="Look A.T."/>
            <person name="Chen Z."/>
        </authorList>
    </citation>
    <scope>NUCLEOTIDE SEQUENCE [LARGE SCALE MRNA] (ISOFORM 2)</scope>
    <source>
        <tissue>Kidney marrow</tissue>
    </source>
</reference>
<reference key="2">
    <citation type="submission" date="2004-10" db="EMBL/GenBank/DDBJ databases">
        <authorList>
            <consortium name="NIH - Zebrafish Gene Collection (ZGC) project"/>
        </authorList>
    </citation>
    <scope>NUCLEOTIDE SEQUENCE [LARGE SCALE MRNA] (ISOFORM 1)</scope>
</reference>
<proteinExistence type="evidence at transcript level"/>
<feature type="chain" id="PRO_0000239825" description="B-cell CLL/lymphoma 7 protein family member A">
    <location>
        <begin position="1"/>
        <end position="201"/>
    </location>
</feature>
<feature type="region of interest" description="Disordered" evidence="1">
    <location>
        <begin position="46"/>
        <end position="201"/>
    </location>
</feature>
<feature type="compositionally biased region" description="Basic and acidic residues" evidence="1">
    <location>
        <begin position="54"/>
        <end position="71"/>
    </location>
</feature>
<feature type="compositionally biased region" description="Polar residues" evidence="1">
    <location>
        <begin position="73"/>
        <end position="83"/>
    </location>
</feature>
<feature type="compositionally biased region" description="Polar residues" evidence="1">
    <location>
        <begin position="93"/>
        <end position="114"/>
    </location>
</feature>
<feature type="compositionally biased region" description="Polar residues" evidence="1">
    <location>
        <begin position="133"/>
        <end position="142"/>
    </location>
</feature>
<feature type="compositionally biased region" description="Basic and acidic residues" evidence="1">
    <location>
        <begin position="158"/>
        <end position="167"/>
    </location>
</feature>
<feature type="compositionally biased region" description="Polar residues" evidence="1">
    <location>
        <begin position="168"/>
        <end position="179"/>
    </location>
</feature>
<feature type="compositionally biased region" description="Basic and acidic residues" evidence="1">
    <location>
        <begin position="192"/>
        <end position="201"/>
    </location>
</feature>
<feature type="splice variant" id="VSP_019274" description="In isoform 2." evidence="2">
    <original>D</original>
    <variation>DK</variation>
    <location>
        <position position="58"/>
    </location>
</feature>
<feature type="splice variant" id="VSP_019275" description="In isoform 2." evidence="2">
    <location>
        <begin position="141"/>
        <end position="146"/>
    </location>
</feature>